<proteinExistence type="evidence at protein level"/>
<keyword id="KW-0001">2Fe-2S</keyword>
<keyword id="KW-0350">Heme biosynthesis</keyword>
<keyword id="KW-0408">Iron</keyword>
<keyword id="KW-0411">Iron-sulfur</keyword>
<keyword id="KW-0456">Lyase</keyword>
<keyword id="KW-0472">Membrane</keyword>
<keyword id="KW-0479">Metal-binding</keyword>
<keyword id="KW-0496">Mitochondrion</keyword>
<keyword id="KW-0999">Mitochondrion inner membrane</keyword>
<keyword id="KW-0627">Porphyrin biosynthesis</keyword>
<keyword id="KW-1185">Reference proteome</keyword>
<keyword id="KW-0809">Transit peptide</keyword>
<evidence type="ECO:0000250" key="1">
    <source>
        <dbReference type="UniProtKB" id="P22315"/>
    </source>
</evidence>
<evidence type="ECO:0000250" key="2">
    <source>
        <dbReference type="UniProtKB" id="P22830"/>
    </source>
</evidence>
<evidence type="ECO:0000255" key="3"/>
<evidence type="ECO:0000256" key="4">
    <source>
        <dbReference type="SAM" id="MobiDB-lite"/>
    </source>
</evidence>
<evidence type="ECO:0000269" key="5">
    <source>
    </source>
</evidence>
<evidence type="ECO:0000305" key="6"/>
<name>HEMH_XENLA</name>
<reference key="1">
    <citation type="journal article" date="1998" name="Arch. Biochem. Biophys.">
        <title>Cloning and characterization of Gallus and Xenopus ferrochelatases: presence of the [2Fe-2S] cluster in nonmammalian ferrochelatase.</title>
        <authorList>
            <person name="Day A.L."/>
            <person name="Parsons B.M."/>
            <person name="Dailey H.A."/>
        </authorList>
    </citation>
    <scope>NUCLEOTIDE SEQUENCE [MRNA]</scope>
    <scope>FUNCTION</scope>
    <scope>CATALYTIC ACTIVITY</scope>
    <scope>PATHWAY</scope>
    <scope>BIOPHYSICOCHEMICAL PROPERTIES</scope>
</reference>
<feature type="transit peptide" description="Mitochondrion" evidence="3">
    <location>
        <begin position="1"/>
        <end position="41"/>
    </location>
</feature>
<feature type="chain" id="PRO_0000008876" description="Ferrochelatase, mitochondrial">
    <location>
        <begin position="42"/>
        <end position="411"/>
    </location>
</feature>
<feature type="region of interest" description="Disordered" evidence="4">
    <location>
        <begin position="34"/>
        <end position="55"/>
    </location>
</feature>
<feature type="compositionally biased region" description="Basic and acidic residues" evidence="4">
    <location>
        <begin position="41"/>
        <end position="51"/>
    </location>
</feature>
<feature type="active site" evidence="2">
    <location>
        <position position="217"/>
    </location>
</feature>
<feature type="active site" evidence="2">
    <location>
        <position position="370"/>
    </location>
</feature>
<feature type="binding site" evidence="2">
    <location>
        <position position="102"/>
    </location>
    <ligand>
        <name>protoporphyrin IX</name>
        <dbReference type="ChEBI" id="CHEBI:57306"/>
    </ligand>
</feature>
<feature type="binding site" evidence="2">
    <location>
        <position position="110"/>
    </location>
    <ligand>
        <name>protoporphyrin IX</name>
        <dbReference type="ChEBI" id="CHEBI:57306"/>
    </ligand>
</feature>
<feature type="binding site" evidence="2">
    <location>
        <position position="117"/>
    </location>
    <ligand>
        <name>protoporphyrin IX</name>
        <dbReference type="ChEBI" id="CHEBI:57306"/>
    </ligand>
</feature>
<feature type="binding site" evidence="2">
    <location>
        <position position="183"/>
    </location>
    <ligand>
        <name>[2Fe-2S] cluster</name>
        <dbReference type="ChEBI" id="CHEBI:190135"/>
    </ligand>
</feature>
<feature type="binding site" evidence="2">
    <location>
        <position position="390"/>
    </location>
    <ligand>
        <name>[2Fe-2S] cluster</name>
        <dbReference type="ChEBI" id="CHEBI:190135"/>
    </ligand>
</feature>
<feature type="binding site" evidence="2">
    <location>
        <position position="393"/>
    </location>
    <ligand>
        <name>[2Fe-2S] cluster</name>
        <dbReference type="ChEBI" id="CHEBI:190135"/>
    </ligand>
</feature>
<feature type="binding site" evidence="2">
    <location>
        <position position="398"/>
    </location>
    <ligand>
        <name>[2Fe-2S] cluster</name>
        <dbReference type="ChEBI" id="CHEBI:190135"/>
    </ligand>
</feature>
<protein>
    <recommendedName>
        <fullName evidence="2">Ferrochelatase, mitochondrial</fullName>
        <ecNumber evidence="5">4.98.1.1</ecNumber>
    </recommendedName>
    <alternativeName>
        <fullName>Heme synthase</fullName>
    </alternativeName>
    <alternativeName>
        <fullName>Protoheme ferro-lyase</fullName>
    </alternativeName>
</protein>
<dbReference type="EC" id="4.98.1.1" evidence="5"/>
<dbReference type="EMBL" id="AF036617">
    <property type="protein sequence ID" value="AAB94626.1"/>
    <property type="molecule type" value="mRNA"/>
</dbReference>
<dbReference type="SMR" id="O57478"/>
<dbReference type="AGR" id="Xenbase:XB-GENE-960757"/>
<dbReference type="Xenbase" id="XB-GENE-960757">
    <property type="gene designation" value="fech.L"/>
</dbReference>
<dbReference type="BRENDA" id="4.99.1.1">
    <property type="organism ID" value="6725"/>
</dbReference>
<dbReference type="SABIO-RK" id="O57478"/>
<dbReference type="UniPathway" id="UPA00252">
    <property type="reaction ID" value="UER00325"/>
</dbReference>
<dbReference type="Proteomes" id="UP000186698">
    <property type="component" value="Unplaced"/>
</dbReference>
<dbReference type="GO" id="GO:0005743">
    <property type="term" value="C:mitochondrial inner membrane"/>
    <property type="evidence" value="ECO:0000250"/>
    <property type="project" value="UniProtKB"/>
</dbReference>
<dbReference type="GO" id="GO:0005739">
    <property type="term" value="C:mitochondrion"/>
    <property type="evidence" value="ECO:0000318"/>
    <property type="project" value="GO_Central"/>
</dbReference>
<dbReference type="GO" id="GO:0051537">
    <property type="term" value="F:2 iron, 2 sulfur cluster binding"/>
    <property type="evidence" value="ECO:0007669"/>
    <property type="project" value="UniProtKB-KW"/>
</dbReference>
<dbReference type="GO" id="GO:0004325">
    <property type="term" value="F:ferrochelatase activity"/>
    <property type="evidence" value="ECO:0000250"/>
    <property type="project" value="UniProtKB"/>
</dbReference>
<dbReference type="GO" id="GO:0046872">
    <property type="term" value="F:metal ion binding"/>
    <property type="evidence" value="ECO:0007669"/>
    <property type="project" value="UniProtKB-KW"/>
</dbReference>
<dbReference type="GO" id="GO:0006783">
    <property type="term" value="P:heme biosynthetic process"/>
    <property type="evidence" value="ECO:0000250"/>
    <property type="project" value="UniProtKB"/>
</dbReference>
<dbReference type="CDD" id="cd00419">
    <property type="entry name" value="Ferrochelatase_C"/>
    <property type="match status" value="1"/>
</dbReference>
<dbReference type="CDD" id="cd03411">
    <property type="entry name" value="Ferrochelatase_N"/>
    <property type="match status" value="1"/>
</dbReference>
<dbReference type="FunFam" id="3.40.50.1400:FF:000003">
    <property type="entry name" value="Ferrochelatase"/>
    <property type="match status" value="1"/>
</dbReference>
<dbReference type="Gene3D" id="3.40.50.1400">
    <property type="match status" value="2"/>
</dbReference>
<dbReference type="HAMAP" id="MF_00323">
    <property type="entry name" value="Ferrochelatase"/>
    <property type="match status" value="1"/>
</dbReference>
<dbReference type="InterPro" id="IPR001015">
    <property type="entry name" value="Ferrochelatase"/>
</dbReference>
<dbReference type="InterPro" id="IPR019772">
    <property type="entry name" value="Ferrochelatase_AS"/>
</dbReference>
<dbReference type="InterPro" id="IPR033644">
    <property type="entry name" value="Ferrochelatase_C"/>
</dbReference>
<dbReference type="InterPro" id="IPR033659">
    <property type="entry name" value="Ferrochelatase_N"/>
</dbReference>
<dbReference type="NCBIfam" id="TIGR00109">
    <property type="entry name" value="hemH"/>
    <property type="match status" value="1"/>
</dbReference>
<dbReference type="PANTHER" id="PTHR11108">
    <property type="entry name" value="FERROCHELATASE"/>
    <property type="match status" value="1"/>
</dbReference>
<dbReference type="PANTHER" id="PTHR11108:SF1">
    <property type="entry name" value="FERROCHELATASE, MITOCHONDRIAL"/>
    <property type="match status" value="1"/>
</dbReference>
<dbReference type="Pfam" id="PF00762">
    <property type="entry name" value="Ferrochelatase"/>
    <property type="match status" value="1"/>
</dbReference>
<dbReference type="SUPFAM" id="SSF53800">
    <property type="entry name" value="Chelatase"/>
    <property type="match status" value="1"/>
</dbReference>
<dbReference type="PROSITE" id="PS00534">
    <property type="entry name" value="FERROCHELATASE"/>
    <property type="match status" value="1"/>
</dbReference>
<sequence length="411" mass="46039">MAAFRAAHRLLGHILRNESSAGLVTQRWSSSAAVASVPKSSDPKPHAQPDKRKPKTGILMLNMGGPETLDDVHGFLLRLFLDKDLMTLPAQSKLAPFIAKRRTPKIQEQYSKIGGGSPIKKWTEQQGEGMVKLLDELSPATAPHKYYIGFRYVRPLTEAAIEEMERDGVERAIAFTQYPQYSCSTTGSSLNAIYRYYNAKGTQPKMKWSVIDRWPTHPLLIQCFADHIQKELNMFPADKRGEVVILFSAHSLPMSVVNRGDPYPQEVGATVQKVMERLGFSNPYRLVWQSKVGPMAWLGPQTDESIKGLCQRGKKNILLVPIAFTSDHIETLYELDIEYAQVLAKECGVENIRRSESLNGNPLFSKALADLVLSHMKSSEICSKQLSLRCPMCVNPVCGEAKSFFTKQQQQ</sequence>
<accession>O57478</accession>
<gene>
    <name evidence="2" type="primary">fech</name>
</gene>
<comment type="function">
    <text evidence="5">Catalyzes the ferrous insertion into protoporphyrin IX.</text>
</comment>
<comment type="catalytic activity">
    <reaction evidence="5">
        <text>heme b + 2 H(+) = protoporphyrin IX + Fe(2+)</text>
        <dbReference type="Rhea" id="RHEA:22584"/>
        <dbReference type="ChEBI" id="CHEBI:15378"/>
        <dbReference type="ChEBI" id="CHEBI:29033"/>
        <dbReference type="ChEBI" id="CHEBI:57306"/>
        <dbReference type="ChEBI" id="CHEBI:60344"/>
        <dbReference type="EC" id="4.98.1.1"/>
    </reaction>
    <physiologicalReaction direction="right-to-left" evidence="5">
        <dbReference type="Rhea" id="RHEA:22586"/>
    </physiologicalReaction>
</comment>
<comment type="cofactor">
    <cofactor evidence="2">
        <name>[2Fe-2S] cluster</name>
        <dbReference type="ChEBI" id="CHEBI:190135"/>
    </cofactor>
    <text evidence="2">Binds 1 [2Fe-2S] cluster.</text>
</comment>
<comment type="biophysicochemical properties">
    <kinetics>
        <KM evidence="5">166 uM for Fe(2+)</KM>
        <KM evidence="5">11.1 uM for protoporphyrin</KM>
    </kinetics>
</comment>
<comment type="pathway">
    <text evidence="5">Porphyrin-containing compound metabolism; protoheme biosynthesis; protoheme from protoporphyrin-IX: step 1/1.</text>
</comment>
<comment type="subunit">
    <text evidence="2">Homodimer. Homotetramer.</text>
</comment>
<comment type="subcellular location">
    <subcellularLocation>
        <location evidence="1">Mitochondrion inner membrane</location>
        <topology evidence="1">Peripheral membrane protein</topology>
        <orientation evidence="1">Matrix side</orientation>
    </subcellularLocation>
</comment>
<comment type="similarity">
    <text evidence="6">Belongs to the ferrochelatase family.</text>
</comment>
<organism>
    <name type="scientific">Xenopus laevis</name>
    <name type="common">African clawed frog</name>
    <dbReference type="NCBI Taxonomy" id="8355"/>
    <lineage>
        <taxon>Eukaryota</taxon>
        <taxon>Metazoa</taxon>
        <taxon>Chordata</taxon>
        <taxon>Craniata</taxon>
        <taxon>Vertebrata</taxon>
        <taxon>Euteleostomi</taxon>
        <taxon>Amphibia</taxon>
        <taxon>Batrachia</taxon>
        <taxon>Anura</taxon>
        <taxon>Pipoidea</taxon>
        <taxon>Pipidae</taxon>
        <taxon>Xenopodinae</taxon>
        <taxon>Xenopus</taxon>
        <taxon>Xenopus</taxon>
    </lineage>
</organism>